<comment type="function">
    <text evidence="1">Component of the acetyl coenzyme A carboxylase (ACC) complex. First, biotin carboxylase catalyzes the carboxylation of biotin on its carrier protein (BCCP) and then the CO(2) group is transferred by the carboxyltransferase to acetyl-CoA to form malonyl-CoA.</text>
</comment>
<comment type="catalytic activity">
    <reaction evidence="1">
        <text>N(6)-carboxybiotinyl-L-lysyl-[protein] + acetyl-CoA = N(6)-biotinyl-L-lysyl-[protein] + malonyl-CoA</text>
        <dbReference type="Rhea" id="RHEA:54728"/>
        <dbReference type="Rhea" id="RHEA-COMP:10505"/>
        <dbReference type="Rhea" id="RHEA-COMP:10506"/>
        <dbReference type="ChEBI" id="CHEBI:57288"/>
        <dbReference type="ChEBI" id="CHEBI:57384"/>
        <dbReference type="ChEBI" id="CHEBI:83144"/>
        <dbReference type="ChEBI" id="CHEBI:83145"/>
        <dbReference type="EC" id="2.1.3.15"/>
    </reaction>
</comment>
<comment type="activity regulation">
    <text evidence="3">Inhibited by pyrrolidine dione antibiotics moiramide B (CPD1) and CPD2.</text>
</comment>
<comment type="pathway">
    <text evidence="1">Lipid metabolism; malonyl-CoA biosynthesis; malonyl-CoA from acetyl-CoA: step 1/1.</text>
</comment>
<comment type="subunit">
    <text evidence="1">Acetyl-CoA carboxylase is a heterohexamer composed of biotin carboxyl carrier protein (AccB), biotin carboxylase (AccC) and two subunits each of ACCase subunit alpha (AccA) and ACCase subunit beta (AccD).</text>
</comment>
<comment type="subcellular location">
    <subcellularLocation>
        <location evidence="1">Cytoplasm</location>
    </subcellularLocation>
</comment>
<comment type="similarity">
    <text evidence="1">Belongs to the AccA family.</text>
</comment>
<evidence type="ECO:0000255" key="1">
    <source>
        <dbReference type="HAMAP-Rule" id="MF_00823"/>
    </source>
</evidence>
<evidence type="ECO:0000255" key="2">
    <source>
        <dbReference type="PROSITE-ProRule" id="PRU01137"/>
    </source>
</evidence>
<evidence type="ECO:0000269" key="3">
    <source>
    </source>
</evidence>
<evidence type="ECO:0000269" key="4">
    <source>
    </source>
</evidence>
<reference key="1">
    <citation type="journal article" date="1997" name="Microbiology">
        <title>Sequencing and functional annotation of the Bacillus subtilis genes in the 200 kb rrnB-dnaB region.</title>
        <authorList>
            <person name="Lapidus A."/>
            <person name="Galleron N."/>
            <person name="Sorokin A."/>
            <person name="Ehrlich S.D."/>
        </authorList>
    </citation>
    <scope>NUCLEOTIDE SEQUENCE [GENOMIC DNA]</scope>
    <source>
        <strain>168</strain>
    </source>
</reference>
<reference key="2">
    <citation type="journal article" date="1997" name="Nature">
        <title>The complete genome sequence of the Gram-positive bacterium Bacillus subtilis.</title>
        <authorList>
            <person name="Kunst F."/>
            <person name="Ogasawara N."/>
            <person name="Moszer I."/>
            <person name="Albertini A.M."/>
            <person name="Alloni G."/>
            <person name="Azevedo V."/>
            <person name="Bertero M.G."/>
            <person name="Bessieres P."/>
            <person name="Bolotin A."/>
            <person name="Borchert S."/>
            <person name="Borriss R."/>
            <person name="Boursier L."/>
            <person name="Brans A."/>
            <person name="Braun M."/>
            <person name="Brignell S.C."/>
            <person name="Bron S."/>
            <person name="Brouillet S."/>
            <person name="Bruschi C.V."/>
            <person name="Caldwell B."/>
            <person name="Capuano V."/>
            <person name="Carter N.M."/>
            <person name="Choi S.-K."/>
            <person name="Codani J.-J."/>
            <person name="Connerton I.F."/>
            <person name="Cummings N.J."/>
            <person name="Daniel R.A."/>
            <person name="Denizot F."/>
            <person name="Devine K.M."/>
            <person name="Duesterhoeft A."/>
            <person name="Ehrlich S.D."/>
            <person name="Emmerson P.T."/>
            <person name="Entian K.-D."/>
            <person name="Errington J."/>
            <person name="Fabret C."/>
            <person name="Ferrari E."/>
            <person name="Foulger D."/>
            <person name="Fritz C."/>
            <person name="Fujita M."/>
            <person name="Fujita Y."/>
            <person name="Fuma S."/>
            <person name="Galizzi A."/>
            <person name="Galleron N."/>
            <person name="Ghim S.-Y."/>
            <person name="Glaser P."/>
            <person name="Goffeau A."/>
            <person name="Golightly E.J."/>
            <person name="Grandi G."/>
            <person name="Guiseppi G."/>
            <person name="Guy B.J."/>
            <person name="Haga K."/>
            <person name="Haiech J."/>
            <person name="Harwood C.R."/>
            <person name="Henaut A."/>
            <person name="Hilbert H."/>
            <person name="Holsappel S."/>
            <person name="Hosono S."/>
            <person name="Hullo M.-F."/>
            <person name="Itaya M."/>
            <person name="Jones L.-M."/>
            <person name="Joris B."/>
            <person name="Karamata D."/>
            <person name="Kasahara Y."/>
            <person name="Klaerr-Blanchard M."/>
            <person name="Klein C."/>
            <person name="Kobayashi Y."/>
            <person name="Koetter P."/>
            <person name="Koningstein G."/>
            <person name="Krogh S."/>
            <person name="Kumano M."/>
            <person name="Kurita K."/>
            <person name="Lapidus A."/>
            <person name="Lardinois S."/>
            <person name="Lauber J."/>
            <person name="Lazarevic V."/>
            <person name="Lee S.-M."/>
            <person name="Levine A."/>
            <person name="Liu H."/>
            <person name="Masuda S."/>
            <person name="Mauel C."/>
            <person name="Medigue C."/>
            <person name="Medina N."/>
            <person name="Mellado R.P."/>
            <person name="Mizuno M."/>
            <person name="Moestl D."/>
            <person name="Nakai S."/>
            <person name="Noback M."/>
            <person name="Noone D."/>
            <person name="O'Reilly M."/>
            <person name="Ogawa K."/>
            <person name="Ogiwara A."/>
            <person name="Oudega B."/>
            <person name="Park S.-H."/>
            <person name="Parro V."/>
            <person name="Pohl T.M."/>
            <person name="Portetelle D."/>
            <person name="Porwollik S."/>
            <person name="Prescott A.M."/>
            <person name="Presecan E."/>
            <person name="Pujic P."/>
            <person name="Purnelle B."/>
            <person name="Rapoport G."/>
            <person name="Rey M."/>
            <person name="Reynolds S."/>
            <person name="Rieger M."/>
            <person name="Rivolta C."/>
            <person name="Rocha E."/>
            <person name="Roche B."/>
            <person name="Rose M."/>
            <person name="Sadaie Y."/>
            <person name="Sato T."/>
            <person name="Scanlan E."/>
            <person name="Schleich S."/>
            <person name="Schroeter R."/>
            <person name="Scoffone F."/>
            <person name="Sekiguchi J."/>
            <person name="Sekowska A."/>
            <person name="Seror S.J."/>
            <person name="Serror P."/>
            <person name="Shin B.-S."/>
            <person name="Soldo B."/>
            <person name="Sorokin A."/>
            <person name="Tacconi E."/>
            <person name="Takagi T."/>
            <person name="Takahashi H."/>
            <person name="Takemaru K."/>
            <person name="Takeuchi M."/>
            <person name="Tamakoshi A."/>
            <person name="Tanaka T."/>
            <person name="Terpstra P."/>
            <person name="Tognoni A."/>
            <person name="Tosato V."/>
            <person name="Uchiyama S."/>
            <person name="Vandenbol M."/>
            <person name="Vannier F."/>
            <person name="Vassarotti A."/>
            <person name="Viari A."/>
            <person name="Wambutt R."/>
            <person name="Wedler E."/>
            <person name="Wedler H."/>
            <person name="Weitzenegger T."/>
            <person name="Winters P."/>
            <person name="Wipat A."/>
            <person name="Yamamoto H."/>
            <person name="Yamane K."/>
            <person name="Yasumoto K."/>
            <person name="Yata K."/>
            <person name="Yoshida K."/>
            <person name="Yoshikawa H.-F."/>
            <person name="Zumstein E."/>
            <person name="Yoshikawa H."/>
            <person name="Danchin A."/>
        </authorList>
    </citation>
    <scope>NUCLEOTIDE SEQUENCE [LARGE SCALE GENOMIC DNA]</scope>
    <source>
        <strain>168</strain>
    </source>
</reference>
<reference key="3">
    <citation type="journal article" date="2004" name="J. Biol. Chem.">
        <title>Identification and characterization of the first class of potent bacterial acetyl-CoA carboxylase inhibitors with antibacterial activity.</title>
        <authorList>
            <person name="Freiberg C."/>
            <person name="Brunner N.A."/>
            <person name="Schiffer G."/>
            <person name="Lampe T."/>
            <person name="Pohlmann J."/>
            <person name="Brands M."/>
            <person name="Raabe M."/>
            <person name="Haebich D."/>
            <person name="Ziegelbauer K."/>
        </authorList>
    </citation>
    <scope>ACTIVITY REGULATION</scope>
    <scope>ANTIBIOTIC RESISTANCE</scope>
    <scope>MUTAGENESIS OF GLY-199</scope>
</reference>
<reference key="4">
    <citation type="journal article" date="2018" name="Biochemistry">
        <title>The Polyene Natural Product Thailandamide A Inhibits Fatty Acid Biosynthesis in Gram-Positive and Gram-Negative Bacteria.</title>
        <authorList>
            <person name="Wu Y."/>
            <person name="Seyedsayamdost M.R."/>
        </authorList>
    </citation>
    <scope>ANTIBIOTIC RESISTANCE</scope>
    <scope>MUTAGENESIS OF GLU-227</scope>
    <source>
        <strain>3610</strain>
    </source>
</reference>
<sequence length="325" mass="36334">MAPRLEFEKPVIELQTKIAELKKFTQDSDMDLSAEIERLEDRLAKLQDDIYKNLKPWDRVQIARLADRPTTLDYIEHLFTDFFECHGDRAYGDDEAIVGGIAKFHGLPVTVIGHQRGKDTKENLVRNFGMPHPEGYRKALRLMKQADKFNRPIICFIDTKGAYPGRAAEERGQSEAIAKNLFEMAGLRVPVICIVIGEGGSGGALGLGVGNHLHMLENSTYSVISPEGAAALLWKDSSLAKKAAETMKITAPDLKELGIIDHMIKEVKGGAHHDVKLQASYMDETLKQSLKTLLKLSEEELVQQRYEKYKAIGKVSVEDQYIGVN</sequence>
<proteinExistence type="evidence at protein level"/>
<name>ACCA_BACSU</name>
<gene>
    <name evidence="1" type="primary">accA</name>
    <name type="ordered locus">BSU29200</name>
</gene>
<feature type="chain" id="PRO_0000146773" description="Acetyl-coenzyme A carboxylase carboxyl transferase subunit alpha">
    <location>
        <begin position="1"/>
        <end position="325"/>
    </location>
</feature>
<feature type="domain" description="CoA carboxyltransferase C-terminal" evidence="2">
    <location>
        <begin position="38"/>
        <end position="292"/>
    </location>
</feature>
<feature type="mutagenesis site" description="Resistant to the pyrrolidine dione antibiotic CPD2." evidence="3">
    <original>G</original>
    <variation>S</variation>
    <location>
        <position position="199"/>
    </location>
</feature>
<feature type="mutagenesis site" description="Resistance to polyketide antibiotic thailandamide." evidence="4">
    <original>E</original>
    <variation>K</variation>
    <location>
        <position position="227"/>
    </location>
</feature>
<keyword id="KW-0046">Antibiotic resistance</keyword>
<keyword id="KW-0067">ATP-binding</keyword>
<keyword id="KW-0963">Cytoplasm</keyword>
<keyword id="KW-0275">Fatty acid biosynthesis</keyword>
<keyword id="KW-0276">Fatty acid metabolism</keyword>
<keyword id="KW-0444">Lipid biosynthesis</keyword>
<keyword id="KW-0443">Lipid metabolism</keyword>
<keyword id="KW-0547">Nucleotide-binding</keyword>
<keyword id="KW-1185">Reference proteome</keyword>
<keyword id="KW-0808">Transferase</keyword>
<dbReference type="EC" id="2.1.3.15" evidence="1"/>
<dbReference type="EMBL" id="AF008220">
    <property type="protein sequence ID" value="AAC00341.1"/>
    <property type="molecule type" value="Genomic_DNA"/>
</dbReference>
<dbReference type="EMBL" id="AL009126">
    <property type="protein sequence ID" value="CAB14880.1"/>
    <property type="molecule type" value="Genomic_DNA"/>
</dbReference>
<dbReference type="PIR" id="G69580">
    <property type="entry name" value="G69580"/>
</dbReference>
<dbReference type="RefSeq" id="NP_390798.1">
    <property type="nucleotide sequence ID" value="NC_000964.3"/>
</dbReference>
<dbReference type="RefSeq" id="WP_003229417.1">
    <property type="nucleotide sequence ID" value="NZ_OZ025638.1"/>
</dbReference>
<dbReference type="SMR" id="O34847"/>
<dbReference type="FunCoup" id="O34847">
    <property type="interactions" value="355"/>
</dbReference>
<dbReference type="STRING" id="224308.BSU29200"/>
<dbReference type="jPOST" id="O34847"/>
<dbReference type="PaxDb" id="224308-BSU29200"/>
<dbReference type="DNASU" id="936367"/>
<dbReference type="EnsemblBacteria" id="CAB14880">
    <property type="protein sequence ID" value="CAB14880"/>
    <property type="gene ID" value="BSU_29200"/>
</dbReference>
<dbReference type="GeneID" id="936367"/>
<dbReference type="KEGG" id="bsu:BSU29200"/>
<dbReference type="PATRIC" id="fig|224308.179.peg.3171"/>
<dbReference type="eggNOG" id="COG0825">
    <property type="taxonomic scope" value="Bacteria"/>
</dbReference>
<dbReference type="InParanoid" id="O34847"/>
<dbReference type="OrthoDB" id="9808023at2"/>
<dbReference type="PhylomeDB" id="O34847"/>
<dbReference type="BioCyc" id="BSUB:BSU29200-MONOMER"/>
<dbReference type="UniPathway" id="UPA00655">
    <property type="reaction ID" value="UER00711"/>
</dbReference>
<dbReference type="Proteomes" id="UP000001570">
    <property type="component" value="Chromosome"/>
</dbReference>
<dbReference type="GO" id="GO:0009317">
    <property type="term" value="C:acetyl-CoA carboxylase complex"/>
    <property type="evidence" value="ECO:0007669"/>
    <property type="project" value="InterPro"/>
</dbReference>
<dbReference type="GO" id="GO:0003989">
    <property type="term" value="F:acetyl-CoA carboxylase activity"/>
    <property type="evidence" value="ECO:0007669"/>
    <property type="project" value="InterPro"/>
</dbReference>
<dbReference type="GO" id="GO:0005524">
    <property type="term" value="F:ATP binding"/>
    <property type="evidence" value="ECO:0007669"/>
    <property type="project" value="UniProtKB-KW"/>
</dbReference>
<dbReference type="GO" id="GO:0016743">
    <property type="term" value="F:carboxyl- or carbamoyltransferase activity"/>
    <property type="evidence" value="ECO:0007669"/>
    <property type="project" value="UniProtKB-UniRule"/>
</dbReference>
<dbReference type="GO" id="GO:0006633">
    <property type="term" value="P:fatty acid biosynthetic process"/>
    <property type="evidence" value="ECO:0007669"/>
    <property type="project" value="UniProtKB-KW"/>
</dbReference>
<dbReference type="GO" id="GO:2001295">
    <property type="term" value="P:malonyl-CoA biosynthetic process"/>
    <property type="evidence" value="ECO:0007669"/>
    <property type="project" value="UniProtKB-UniRule"/>
</dbReference>
<dbReference type="GO" id="GO:0046677">
    <property type="term" value="P:response to antibiotic"/>
    <property type="evidence" value="ECO:0007669"/>
    <property type="project" value="UniProtKB-KW"/>
</dbReference>
<dbReference type="Gene3D" id="3.90.226.10">
    <property type="entry name" value="2-enoyl-CoA Hydratase, Chain A, domain 1"/>
    <property type="match status" value="1"/>
</dbReference>
<dbReference type="HAMAP" id="MF_00823">
    <property type="entry name" value="AcetylCoA_CT_alpha"/>
    <property type="match status" value="1"/>
</dbReference>
<dbReference type="InterPro" id="IPR001095">
    <property type="entry name" value="Acetyl_CoA_COase_a_su"/>
</dbReference>
<dbReference type="InterPro" id="IPR029045">
    <property type="entry name" value="ClpP/crotonase-like_dom_sf"/>
</dbReference>
<dbReference type="InterPro" id="IPR011763">
    <property type="entry name" value="COA_CT_C"/>
</dbReference>
<dbReference type="NCBIfam" id="TIGR00513">
    <property type="entry name" value="accA"/>
    <property type="match status" value="1"/>
</dbReference>
<dbReference type="NCBIfam" id="NF041504">
    <property type="entry name" value="AccA_sub"/>
    <property type="match status" value="1"/>
</dbReference>
<dbReference type="NCBIfam" id="NF004344">
    <property type="entry name" value="PRK05724.1"/>
    <property type="match status" value="1"/>
</dbReference>
<dbReference type="PANTHER" id="PTHR42853">
    <property type="entry name" value="ACETYL-COENZYME A CARBOXYLASE CARBOXYL TRANSFERASE SUBUNIT ALPHA"/>
    <property type="match status" value="1"/>
</dbReference>
<dbReference type="PANTHER" id="PTHR42853:SF3">
    <property type="entry name" value="ACETYL-COENZYME A CARBOXYLASE CARBOXYL TRANSFERASE SUBUNIT ALPHA, CHLOROPLASTIC"/>
    <property type="match status" value="1"/>
</dbReference>
<dbReference type="Pfam" id="PF03255">
    <property type="entry name" value="ACCA"/>
    <property type="match status" value="1"/>
</dbReference>
<dbReference type="PRINTS" id="PR01069">
    <property type="entry name" value="ACCCTRFRASEA"/>
</dbReference>
<dbReference type="SUPFAM" id="SSF52096">
    <property type="entry name" value="ClpP/crotonase"/>
    <property type="match status" value="1"/>
</dbReference>
<dbReference type="PROSITE" id="PS50989">
    <property type="entry name" value="COA_CT_CTER"/>
    <property type="match status" value="1"/>
</dbReference>
<accession>O34847</accession>
<organism>
    <name type="scientific">Bacillus subtilis (strain 168)</name>
    <dbReference type="NCBI Taxonomy" id="224308"/>
    <lineage>
        <taxon>Bacteria</taxon>
        <taxon>Bacillati</taxon>
        <taxon>Bacillota</taxon>
        <taxon>Bacilli</taxon>
        <taxon>Bacillales</taxon>
        <taxon>Bacillaceae</taxon>
        <taxon>Bacillus</taxon>
    </lineage>
</organism>
<protein>
    <recommendedName>
        <fullName evidence="1">Acetyl-coenzyme A carboxylase carboxyl transferase subunit alpha</fullName>
        <shortName evidence="1">ACCase subunit alpha</shortName>
        <shortName evidence="1">Acetyl-CoA carboxylase carboxyltransferase subunit alpha</shortName>
        <ecNumber evidence="1">2.1.3.15</ecNumber>
    </recommendedName>
</protein>